<name>MURG_PARD8</name>
<gene>
    <name evidence="1" type="primary">murG</name>
    <name type="ordered locus">BDI_2487</name>
</gene>
<keyword id="KW-0131">Cell cycle</keyword>
<keyword id="KW-0132">Cell division</keyword>
<keyword id="KW-0997">Cell inner membrane</keyword>
<keyword id="KW-1003">Cell membrane</keyword>
<keyword id="KW-0133">Cell shape</keyword>
<keyword id="KW-0961">Cell wall biogenesis/degradation</keyword>
<keyword id="KW-0328">Glycosyltransferase</keyword>
<keyword id="KW-0472">Membrane</keyword>
<keyword id="KW-0573">Peptidoglycan synthesis</keyword>
<keyword id="KW-1185">Reference proteome</keyword>
<keyword id="KW-0808">Transferase</keyword>
<reference key="1">
    <citation type="journal article" date="2007" name="PLoS Biol.">
        <title>Evolution of symbiotic bacteria in the distal human intestine.</title>
        <authorList>
            <person name="Xu J."/>
            <person name="Mahowald M.A."/>
            <person name="Ley R.E."/>
            <person name="Lozupone C.A."/>
            <person name="Hamady M."/>
            <person name="Martens E.C."/>
            <person name="Henrissat B."/>
            <person name="Coutinho P.M."/>
            <person name="Minx P."/>
            <person name="Latreille P."/>
            <person name="Cordum H."/>
            <person name="Van Brunt A."/>
            <person name="Kim K."/>
            <person name="Fulton R.S."/>
            <person name="Fulton L.A."/>
            <person name="Clifton S.W."/>
            <person name="Wilson R.K."/>
            <person name="Knight R.D."/>
            <person name="Gordon J.I."/>
        </authorList>
    </citation>
    <scope>NUCLEOTIDE SEQUENCE [LARGE SCALE GENOMIC DNA]</scope>
    <source>
        <strain>ATCC 8503 / DSM 20701 / CIP 104284 / JCM 5825 / NCTC 11152</strain>
    </source>
</reference>
<feature type="chain" id="PRO_0000315132" description="UDP-N-acetylglucosamine--N-acetylmuramyl-(pentapeptide) pyrophosphoryl-undecaprenol N-acetylglucosamine transferase">
    <location>
        <begin position="1"/>
        <end position="368"/>
    </location>
</feature>
<feature type="binding site" evidence="1">
    <location>
        <begin position="13"/>
        <end position="15"/>
    </location>
    <ligand>
        <name>UDP-N-acetyl-alpha-D-glucosamine</name>
        <dbReference type="ChEBI" id="CHEBI:57705"/>
    </ligand>
</feature>
<feature type="binding site" evidence="1">
    <location>
        <position position="127"/>
    </location>
    <ligand>
        <name>UDP-N-acetyl-alpha-D-glucosamine</name>
        <dbReference type="ChEBI" id="CHEBI:57705"/>
    </ligand>
</feature>
<feature type="binding site" evidence="1">
    <location>
        <position position="168"/>
    </location>
    <ligand>
        <name>UDP-N-acetyl-alpha-D-glucosamine</name>
        <dbReference type="ChEBI" id="CHEBI:57705"/>
    </ligand>
</feature>
<feature type="binding site" evidence="1">
    <location>
        <position position="200"/>
    </location>
    <ligand>
        <name>UDP-N-acetyl-alpha-D-glucosamine</name>
        <dbReference type="ChEBI" id="CHEBI:57705"/>
    </ligand>
</feature>
<feature type="binding site" evidence="1">
    <location>
        <position position="254"/>
    </location>
    <ligand>
        <name>UDP-N-acetyl-alpha-D-glucosamine</name>
        <dbReference type="ChEBI" id="CHEBI:57705"/>
    </ligand>
</feature>
<feature type="binding site" evidence="1">
    <location>
        <position position="299"/>
    </location>
    <ligand>
        <name>UDP-N-acetyl-alpha-D-glucosamine</name>
        <dbReference type="ChEBI" id="CHEBI:57705"/>
    </ligand>
</feature>
<evidence type="ECO:0000255" key="1">
    <source>
        <dbReference type="HAMAP-Rule" id="MF_00033"/>
    </source>
</evidence>
<organism>
    <name type="scientific">Parabacteroides distasonis (strain ATCC 8503 / DSM 20701 / CIP 104284 / JCM 5825 / NCTC 11152)</name>
    <dbReference type="NCBI Taxonomy" id="435591"/>
    <lineage>
        <taxon>Bacteria</taxon>
        <taxon>Pseudomonadati</taxon>
        <taxon>Bacteroidota</taxon>
        <taxon>Bacteroidia</taxon>
        <taxon>Bacteroidales</taxon>
        <taxon>Tannerellaceae</taxon>
        <taxon>Parabacteroides</taxon>
    </lineage>
</organism>
<dbReference type="EC" id="2.4.1.227" evidence="1"/>
<dbReference type="EMBL" id="CP000140">
    <property type="protein sequence ID" value="ABR44207.1"/>
    <property type="molecule type" value="Genomic_DNA"/>
</dbReference>
<dbReference type="RefSeq" id="WP_005861373.1">
    <property type="nucleotide sequence ID" value="NC_009615.1"/>
</dbReference>
<dbReference type="SMR" id="A6LEU3"/>
<dbReference type="STRING" id="435591.BDI_2487"/>
<dbReference type="CAZy" id="GT28">
    <property type="family name" value="Glycosyltransferase Family 28"/>
</dbReference>
<dbReference type="PaxDb" id="435591-BDI_2487"/>
<dbReference type="KEGG" id="pdi:BDI_2487"/>
<dbReference type="eggNOG" id="COG0707">
    <property type="taxonomic scope" value="Bacteria"/>
</dbReference>
<dbReference type="HOGENOM" id="CLU_037404_0_1_10"/>
<dbReference type="BioCyc" id="PDIS435591:G1G5A-2556-MONOMER"/>
<dbReference type="UniPathway" id="UPA00219"/>
<dbReference type="Proteomes" id="UP000000566">
    <property type="component" value="Chromosome"/>
</dbReference>
<dbReference type="GO" id="GO:0005886">
    <property type="term" value="C:plasma membrane"/>
    <property type="evidence" value="ECO:0007669"/>
    <property type="project" value="UniProtKB-SubCell"/>
</dbReference>
<dbReference type="GO" id="GO:0051991">
    <property type="term" value="F:UDP-N-acetyl-D-glucosamine:N-acetylmuramoyl-L-alanyl-D-glutamyl-meso-2,6-diaminopimelyl-D-alanyl-D-alanine-diphosphoundecaprenol 4-beta-N-acetylglucosaminlytransferase activity"/>
    <property type="evidence" value="ECO:0007669"/>
    <property type="project" value="RHEA"/>
</dbReference>
<dbReference type="GO" id="GO:0050511">
    <property type="term" value="F:undecaprenyldiphospho-muramoylpentapeptide beta-N-acetylglucosaminyltransferase activity"/>
    <property type="evidence" value="ECO:0007669"/>
    <property type="project" value="UniProtKB-UniRule"/>
</dbReference>
<dbReference type="GO" id="GO:0005975">
    <property type="term" value="P:carbohydrate metabolic process"/>
    <property type="evidence" value="ECO:0007669"/>
    <property type="project" value="InterPro"/>
</dbReference>
<dbReference type="GO" id="GO:0051301">
    <property type="term" value="P:cell division"/>
    <property type="evidence" value="ECO:0007669"/>
    <property type="project" value="UniProtKB-KW"/>
</dbReference>
<dbReference type="GO" id="GO:0071555">
    <property type="term" value="P:cell wall organization"/>
    <property type="evidence" value="ECO:0007669"/>
    <property type="project" value="UniProtKB-KW"/>
</dbReference>
<dbReference type="GO" id="GO:0030259">
    <property type="term" value="P:lipid glycosylation"/>
    <property type="evidence" value="ECO:0007669"/>
    <property type="project" value="UniProtKB-UniRule"/>
</dbReference>
<dbReference type="GO" id="GO:0009252">
    <property type="term" value="P:peptidoglycan biosynthetic process"/>
    <property type="evidence" value="ECO:0007669"/>
    <property type="project" value="UniProtKB-UniRule"/>
</dbReference>
<dbReference type="GO" id="GO:0008360">
    <property type="term" value="P:regulation of cell shape"/>
    <property type="evidence" value="ECO:0007669"/>
    <property type="project" value="UniProtKB-KW"/>
</dbReference>
<dbReference type="CDD" id="cd03785">
    <property type="entry name" value="GT28_MurG"/>
    <property type="match status" value="1"/>
</dbReference>
<dbReference type="Gene3D" id="3.40.50.2000">
    <property type="entry name" value="Glycogen Phosphorylase B"/>
    <property type="match status" value="2"/>
</dbReference>
<dbReference type="HAMAP" id="MF_00033">
    <property type="entry name" value="MurG"/>
    <property type="match status" value="1"/>
</dbReference>
<dbReference type="InterPro" id="IPR006009">
    <property type="entry name" value="GlcNAc_MurG"/>
</dbReference>
<dbReference type="InterPro" id="IPR007235">
    <property type="entry name" value="Glyco_trans_28_C"/>
</dbReference>
<dbReference type="InterPro" id="IPR004276">
    <property type="entry name" value="GlycoTrans_28_N"/>
</dbReference>
<dbReference type="NCBIfam" id="TIGR01133">
    <property type="entry name" value="murG"/>
    <property type="match status" value="1"/>
</dbReference>
<dbReference type="PANTHER" id="PTHR21015:SF22">
    <property type="entry name" value="GLYCOSYLTRANSFERASE"/>
    <property type="match status" value="1"/>
</dbReference>
<dbReference type="PANTHER" id="PTHR21015">
    <property type="entry name" value="UDP-N-ACETYLGLUCOSAMINE--N-ACETYLMURAMYL-(PENTAPEPTIDE) PYROPHOSPHORYL-UNDECAPRENOL N-ACETYLGLUCOSAMINE TRANSFERASE 1"/>
    <property type="match status" value="1"/>
</dbReference>
<dbReference type="Pfam" id="PF04101">
    <property type="entry name" value="Glyco_tran_28_C"/>
    <property type="match status" value="1"/>
</dbReference>
<dbReference type="Pfam" id="PF03033">
    <property type="entry name" value="Glyco_transf_28"/>
    <property type="match status" value="1"/>
</dbReference>
<dbReference type="SUPFAM" id="SSF53756">
    <property type="entry name" value="UDP-Glycosyltransferase/glycogen phosphorylase"/>
    <property type="match status" value="1"/>
</dbReference>
<comment type="function">
    <text evidence="1">Cell wall formation. Catalyzes the transfer of a GlcNAc subunit on undecaprenyl-pyrophosphoryl-MurNAc-pentapeptide (lipid intermediate I) to form undecaprenyl-pyrophosphoryl-MurNAc-(pentapeptide)GlcNAc (lipid intermediate II).</text>
</comment>
<comment type="catalytic activity">
    <reaction evidence="1">
        <text>di-trans,octa-cis-undecaprenyl diphospho-N-acetyl-alpha-D-muramoyl-L-alanyl-D-glutamyl-meso-2,6-diaminopimeloyl-D-alanyl-D-alanine + UDP-N-acetyl-alpha-D-glucosamine = di-trans,octa-cis-undecaprenyl diphospho-[N-acetyl-alpha-D-glucosaminyl-(1-&gt;4)]-N-acetyl-alpha-D-muramoyl-L-alanyl-D-glutamyl-meso-2,6-diaminopimeloyl-D-alanyl-D-alanine + UDP + H(+)</text>
        <dbReference type="Rhea" id="RHEA:31227"/>
        <dbReference type="ChEBI" id="CHEBI:15378"/>
        <dbReference type="ChEBI" id="CHEBI:57705"/>
        <dbReference type="ChEBI" id="CHEBI:58223"/>
        <dbReference type="ChEBI" id="CHEBI:61387"/>
        <dbReference type="ChEBI" id="CHEBI:61388"/>
        <dbReference type="EC" id="2.4.1.227"/>
    </reaction>
</comment>
<comment type="pathway">
    <text evidence="1">Cell wall biogenesis; peptidoglycan biosynthesis.</text>
</comment>
<comment type="subcellular location">
    <subcellularLocation>
        <location evidence="1">Cell inner membrane</location>
        <topology evidence="1">Peripheral membrane protein</topology>
        <orientation evidence="1">Cytoplasmic side</orientation>
    </subcellularLocation>
</comment>
<comment type="similarity">
    <text evidence="1">Belongs to the glycosyltransferase 28 family. MurG subfamily.</text>
</comment>
<sequence>MRKYRIIISGGGTGGHIFPAISIANTFKKRFPDAEILFVGAEDRMEMDKVPAAGYKIVGLPVSGFDRAHLMNNVKVMVRLAKSLRLARKTIREFKPDIAVGVGGYASGPTLWMAASQGVPALIQEQNSYAGVTNKLLAKKASKICVAYEGMEKFFPADKIVITGNPVRQDLEEALSKKEEALAFFGLSPEKKTILVVGGSLGARTINRSIQGDLDKFFASDVQVIWQTGRYYYSDASKHLKAYRGMPVWCSDFITRMDYAYSAADLVISRAGASSISELCLLGKPVVLVPSPNVAEDHQTKNALALVHKDAAVMIADKDAEKDLVPTALKIVHDDERLCTLSRNIETLAQRHSADRIVDEIVKIIDKK</sequence>
<accession>A6LEU3</accession>
<proteinExistence type="inferred from homology"/>
<protein>
    <recommendedName>
        <fullName evidence="1">UDP-N-acetylglucosamine--N-acetylmuramyl-(pentapeptide) pyrophosphoryl-undecaprenol N-acetylglucosamine transferase</fullName>
        <ecNumber evidence="1">2.4.1.227</ecNumber>
    </recommendedName>
    <alternativeName>
        <fullName evidence="1">Undecaprenyl-PP-MurNAc-pentapeptide-UDPGlcNAc GlcNAc transferase</fullName>
    </alternativeName>
</protein>